<keyword id="KW-0025">Alternative splicing</keyword>
<keyword id="KW-0131">Cell cycle</keyword>
<keyword id="KW-0963">Cytoplasm</keyword>
<keyword id="KW-0206">Cytoskeleton</keyword>
<keyword id="KW-0378">Hydrolase</keyword>
<keyword id="KW-0539">Nucleus</keyword>
<keyword id="KW-1185">Reference proteome</keyword>
<accession>Q70EL3</accession>
<accession>E9PP86</accession>
<gene>
    <name evidence="8" type="primary">USP50</name>
</gene>
<proteinExistence type="evidence at protein level"/>
<feature type="chain" id="PRO_0000249527" description="Ubiquitin carboxyl-terminal hydrolase 50">
    <location>
        <begin position="1"/>
        <end position="339"/>
    </location>
</feature>
<feature type="domain" description="USP">
    <location>
        <begin position="44"/>
        <end position="339"/>
    </location>
</feature>
<feature type="active site" description="Nucleophile" evidence="1 2 5 6">
    <location>
        <position position="53"/>
    </location>
</feature>
<feature type="active site" description="Proton acceptor" evidence="1 2">
    <location>
        <position position="327"/>
    </location>
</feature>
<feature type="splice variant" id="VSP_054248" description="In isoform 2." evidence="7">
    <original>KFLLPS</original>
    <variation>N</variation>
    <location>
        <begin position="83"/>
        <end position="88"/>
    </location>
</feature>
<feature type="mutagenesis site" description="Abolishes ubiquitin-like protein peptidase activity." evidence="5 6">
    <original>C</original>
    <variation>S</variation>
    <location>
        <position position="53"/>
    </location>
</feature>
<feature type="mutagenesis site" description="Does not affect ubiquitin-like protein peptidase activity." evidence="5">
    <original>H</original>
    <variation>A</variation>
    <location>
        <position position="327"/>
    </location>
</feature>
<sequence length="339" mass="38955">MTSQPSLPADDFDIYHVLAECTDYYDTLPVKEADGNQPHFQGVTGLWNLGNTCCVNAISQCLCSILPLVEYFLTGKYITALQKFLLPSDCSEVATAFAYLMTDMWLGDSDCVSPEIFWSALGNLYPAFTKKMQQDAQEFLICVLNELHEALKKYHYSRRRSYEKGSTQRCCRKWITTETSIITQLFEEQLNYSIVCLKCEKCTYKNEVFTVFSLPIPSKYECSLRDCLQCFFQQDALTWNNEIHCSFCETKQETAVRASISKAPKIIIFHLKRFDIQGTTKRKLRTDIHYPLTNLDLTPYICSIFRKYPKYNLCAVVNHFGDLDGGHYTAFCKNSVTQA</sequence>
<evidence type="ECO:0000255" key="1">
    <source>
        <dbReference type="PROSITE-ProRule" id="PRU10092"/>
    </source>
</evidence>
<evidence type="ECO:0000255" key="2">
    <source>
        <dbReference type="PROSITE-ProRule" id="PRU10093"/>
    </source>
</evidence>
<evidence type="ECO:0000269" key="3">
    <source>
    </source>
</evidence>
<evidence type="ECO:0000269" key="4">
    <source>
    </source>
</evidence>
<evidence type="ECO:0000269" key="5">
    <source>
    </source>
</evidence>
<evidence type="ECO:0000269" key="6">
    <source>
    </source>
</evidence>
<evidence type="ECO:0000305" key="7"/>
<evidence type="ECO:0000312" key="8">
    <source>
        <dbReference type="HGNC" id="HGNC:20079"/>
    </source>
</evidence>
<organism>
    <name type="scientific">Homo sapiens</name>
    <name type="common">Human</name>
    <dbReference type="NCBI Taxonomy" id="9606"/>
    <lineage>
        <taxon>Eukaryota</taxon>
        <taxon>Metazoa</taxon>
        <taxon>Chordata</taxon>
        <taxon>Craniata</taxon>
        <taxon>Vertebrata</taxon>
        <taxon>Euteleostomi</taxon>
        <taxon>Mammalia</taxon>
        <taxon>Eutheria</taxon>
        <taxon>Euarchontoglires</taxon>
        <taxon>Primates</taxon>
        <taxon>Haplorrhini</taxon>
        <taxon>Catarrhini</taxon>
        <taxon>Hominidae</taxon>
        <taxon>Homo</taxon>
    </lineage>
</organism>
<dbReference type="EC" id="3.4.19.12" evidence="5 6"/>
<dbReference type="EMBL" id="AJ583818">
    <property type="protein sequence ID" value="CAE47745.2"/>
    <property type="molecule type" value="mRNA"/>
</dbReference>
<dbReference type="EMBL" id="BN000339">
    <property type="protein sequence ID" value="CAE48395.1"/>
    <property type="molecule type" value="mRNA"/>
</dbReference>
<dbReference type="EMBL" id="AC012170">
    <property type="status" value="NOT_ANNOTATED_CDS"/>
    <property type="molecule type" value="Genomic_DNA"/>
</dbReference>
<dbReference type="CCDS" id="CCDS53944.1">
    <molecule id="Q70EL3-2"/>
</dbReference>
<dbReference type="RefSeq" id="NP_987090.2">
    <molecule id="Q70EL3-2"/>
    <property type="nucleotide sequence ID" value="NM_203494.5"/>
</dbReference>
<dbReference type="SMR" id="Q70EL3"/>
<dbReference type="BioGRID" id="131884">
    <property type="interactions" value="34"/>
</dbReference>
<dbReference type="FunCoup" id="Q70EL3">
    <property type="interactions" value="17"/>
</dbReference>
<dbReference type="IntAct" id="Q70EL3">
    <property type="interactions" value="21"/>
</dbReference>
<dbReference type="STRING" id="9606.ENSP00000434676"/>
<dbReference type="MEROPS" id="C19.058"/>
<dbReference type="GlyGen" id="Q70EL3">
    <property type="glycosylation" value="1 site, 1 O-linked glycan (1 site)"/>
</dbReference>
<dbReference type="iPTMnet" id="Q70EL3"/>
<dbReference type="PhosphoSitePlus" id="Q70EL3"/>
<dbReference type="BioMuta" id="USP50"/>
<dbReference type="DMDM" id="74723115"/>
<dbReference type="PaxDb" id="9606-ENSP00000434676"/>
<dbReference type="ProteomicsDB" id="22642"/>
<dbReference type="ProteomicsDB" id="68548">
    <molecule id="Q70EL3-1"/>
</dbReference>
<dbReference type="Antibodypedia" id="24751">
    <property type="antibodies" value="120 antibodies from 25 providers"/>
</dbReference>
<dbReference type="DNASU" id="373509"/>
<dbReference type="Ensembl" id="ENST00000532404.6">
    <molecule id="Q70EL3-2"/>
    <property type="protein sequence ID" value="ENSP00000434676.1"/>
    <property type="gene ID" value="ENSG00000170236.16"/>
</dbReference>
<dbReference type="GeneID" id="373509"/>
<dbReference type="KEGG" id="hsa:373509"/>
<dbReference type="MANE-Select" id="ENST00000532404.6">
    <molecule id="Q70EL3-2"/>
    <property type="protein sequence ID" value="ENSP00000434676.1"/>
    <property type="RefSeq nucleotide sequence ID" value="NM_203494.5"/>
    <property type="RefSeq protein sequence ID" value="NP_987090.2"/>
</dbReference>
<dbReference type="UCSC" id="uc021sky.2">
    <molecule id="Q70EL3-1"/>
    <property type="organism name" value="human"/>
</dbReference>
<dbReference type="AGR" id="HGNC:20079"/>
<dbReference type="CTD" id="373509"/>
<dbReference type="DisGeNET" id="373509"/>
<dbReference type="GeneCards" id="USP50"/>
<dbReference type="HGNC" id="HGNC:20079">
    <property type="gene designation" value="USP50"/>
</dbReference>
<dbReference type="HPA" id="ENSG00000170236">
    <property type="expression patterns" value="Tissue enhanced (testis)"/>
</dbReference>
<dbReference type="MIM" id="620563">
    <property type="type" value="gene"/>
</dbReference>
<dbReference type="neXtProt" id="NX_Q70EL3"/>
<dbReference type="OpenTargets" id="ENSG00000170236"/>
<dbReference type="VEuPathDB" id="HostDB:ENSG00000170236"/>
<dbReference type="eggNOG" id="KOG1868">
    <property type="taxonomic scope" value="Eukaryota"/>
</dbReference>
<dbReference type="GeneTree" id="ENSGT00940000160441"/>
<dbReference type="HOGENOM" id="CLU_008279_1_3_1"/>
<dbReference type="InParanoid" id="Q70EL3"/>
<dbReference type="OrthoDB" id="292964at2759"/>
<dbReference type="PAN-GO" id="Q70EL3">
    <property type="GO annotations" value="11 GO annotations based on evolutionary models"/>
</dbReference>
<dbReference type="PhylomeDB" id="Q70EL3"/>
<dbReference type="TreeFam" id="TF106277"/>
<dbReference type="PathwayCommons" id="Q70EL3"/>
<dbReference type="SignaLink" id="Q70EL3"/>
<dbReference type="BioGRID-ORCS" id="373509">
    <property type="hits" value="11 hits in 1155 CRISPR screens"/>
</dbReference>
<dbReference type="ChiTaRS" id="USP50">
    <property type="organism name" value="human"/>
</dbReference>
<dbReference type="GenomeRNAi" id="373509"/>
<dbReference type="Pharos" id="Q70EL3">
    <property type="development level" value="Tbio"/>
</dbReference>
<dbReference type="PRO" id="PR:Q70EL3"/>
<dbReference type="Proteomes" id="UP000005640">
    <property type="component" value="Chromosome 15"/>
</dbReference>
<dbReference type="RNAct" id="Q70EL3">
    <property type="molecule type" value="protein"/>
</dbReference>
<dbReference type="Bgee" id="ENSG00000170236">
    <property type="expression patterns" value="Expressed in left testis and 95 other cell types or tissues"/>
</dbReference>
<dbReference type="ExpressionAtlas" id="Q70EL3">
    <property type="expression patterns" value="baseline and differential"/>
</dbReference>
<dbReference type="GO" id="GO:0005813">
    <property type="term" value="C:centrosome"/>
    <property type="evidence" value="ECO:0000314"/>
    <property type="project" value="UniProtKB"/>
</dbReference>
<dbReference type="GO" id="GO:0005737">
    <property type="term" value="C:cytoplasm"/>
    <property type="evidence" value="ECO:0000314"/>
    <property type="project" value="UniProtKB"/>
</dbReference>
<dbReference type="GO" id="GO:0005829">
    <property type="term" value="C:cytosol"/>
    <property type="evidence" value="ECO:0000318"/>
    <property type="project" value="GO_Central"/>
</dbReference>
<dbReference type="GO" id="GO:0030496">
    <property type="term" value="C:midbody"/>
    <property type="evidence" value="ECO:0000318"/>
    <property type="project" value="GO_Central"/>
</dbReference>
<dbReference type="GO" id="GO:0005634">
    <property type="term" value="C:nucleus"/>
    <property type="evidence" value="ECO:0000314"/>
    <property type="project" value="UniProtKB"/>
</dbReference>
<dbReference type="GO" id="GO:0014069">
    <property type="term" value="C:postsynaptic density"/>
    <property type="evidence" value="ECO:0000318"/>
    <property type="project" value="GO_Central"/>
</dbReference>
<dbReference type="GO" id="GO:0004843">
    <property type="term" value="F:cysteine-type deubiquitinase activity"/>
    <property type="evidence" value="ECO:0000314"/>
    <property type="project" value="UniProtKB"/>
</dbReference>
<dbReference type="GO" id="GO:0019783">
    <property type="term" value="F:ubiquitin-like protein peptidase activity"/>
    <property type="evidence" value="ECO:0000314"/>
    <property type="project" value="MGI"/>
</dbReference>
<dbReference type="GO" id="GO:0007032">
    <property type="term" value="P:endosome organization"/>
    <property type="evidence" value="ECO:0000318"/>
    <property type="project" value="GO_Central"/>
</dbReference>
<dbReference type="GO" id="GO:0035063">
    <property type="term" value="P:nuclear speck organization"/>
    <property type="evidence" value="ECO:0000315"/>
    <property type="project" value="MGI"/>
</dbReference>
<dbReference type="GO" id="GO:0032731">
    <property type="term" value="P:positive regulation of interleukin-1 beta production"/>
    <property type="evidence" value="ECO:0000315"/>
    <property type="project" value="MGI"/>
</dbReference>
<dbReference type="GO" id="GO:0032741">
    <property type="term" value="P:positive regulation of interleukin-18 production"/>
    <property type="evidence" value="ECO:0007669"/>
    <property type="project" value="Ensembl"/>
</dbReference>
<dbReference type="GO" id="GO:1900227">
    <property type="term" value="P:positive regulation of NLRP3 inflammasome complex assembly"/>
    <property type="evidence" value="ECO:0000315"/>
    <property type="project" value="MGI"/>
</dbReference>
<dbReference type="GO" id="GO:0016579">
    <property type="term" value="P:protein deubiquitination"/>
    <property type="evidence" value="ECO:0000314"/>
    <property type="project" value="MGI"/>
</dbReference>
<dbReference type="GO" id="GO:0007265">
    <property type="term" value="P:Ras protein signal transduction"/>
    <property type="evidence" value="ECO:0000318"/>
    <property type="project" value="GO_Central"/>
</dbReference>
<dbReference type="GO" id="GO:1902749">
    <property type="term" value="P:regulation of cell cycle G2/M phase transition"/>
    <property type="evidence" value="ECO:0000315"/>
    <property type="project" value="UniProtKB"/>
</dbReference>
<dbReference type="CDD" id="cd02674">
    <property type="entry name" value="Peptidase_C19R"/>
    <property type="match status" value="1"/>
</dbReference>
<dbReference type="FunFam" id="3.90.70.10:FF:000084">
    <property type="entry name" value="inactive ubiquitin carboxyl-terminal hydrolase 50"/>
    <property type="match status" value="1"/>
</dbReference>
<dbReference type="Gene3D" id="3.90.70.10">
    <property type="entry name" value="Cysteine proteinases"/>
    <property type="match status" value="1"/>
</dbReference>
<dbReference type="InterPro" id="IPR038765">
    <property type="entry name" value="Papain-like_cys_pep_sf"/>
</dbReference>
<dbReference type="InterPro" id="IPR001394">
    <property type="entry name" value="Peptidase_C19_UCH"/>
</dbReference>
<dbReference type="InterPro" id="IPR050185">
    <property type="entry name" value="Ub_carboxyl-term_hydrolase"/>
</dbReference>
<dbReference type="InterPro" id="IPR018200">
    <property type="entry name" value="USP_CS"/>
</dbReference>
<dbReference type="InterPro" id="IPR028889">
    <property type="entry name" value="USP_dom"/>
</dbReference>
<dbReference type="PANTHER" id="PTHR21646:SF11">
    <property type="entry name" value="INACTIVE UBIQUITIN CARBOXYL-TERMINAL HYDROLASE 50"/>
    <property type="match status" value="1"/>
</dbReference>
<dbReference type="PANTHER" id="PTHR21646">
    <property type="entry name" value="UBIQUITIN CARBOXYL-TERMINAL HYDROLASE"/>
    <property type="match status" value="1"/>
</dbReference>
<dbReference type="Pfam" id="PF00443">
    <property type="entry name" value="UCH"/>
    <property type="match status" value="1"/>
</dbReference>
<dbReference type="SUPFAM" id="SSF54001">
    <property type="entry name" value="Cysteine proteinases"/>
    <property type="match status" value="1"/>
</dbReference>
<dbReference type="PROSITE" id="PS00972">
    <property type="entry name" value="USP_1"/>
    <property type="match status" value="1"/>
</dbReference>
<dbReference type="PROSITE" id="PS00973">
    <property type="entry name" value="USP_2"/>
    <property type="match status" value="1"/>
</dbReference>
<dbReference type="PROSITE" id="PS50235">
    <property type="entry name" value="USP_3"/>
    <property type="match status" value="1"/>
</dbReference>
<name>UBP50_HUMAN</name>
<reference key="1">
    <citation type="journal article" date="2004" name="Biochem. Biophys. Res. Commun.">
        <title>Cloning and enzymatic analysis of 22 novel human ubiquitin-specific proteases.</title>
        <authorList>
            <person name="Quesada V."/>
            <person name="Diaz-Perales A."/>
            <person name="Gutierrez-Fernandez A."/>
            <person name="Garabaya C."/>
            <person name="Cal S."/>
            <person name="Lopez-Otin C."/>
        </authorList>
    </citation>
    <scope>NUCLEOTIDE SEQUENCE [MRNA] (ISOFORM 1)</scope>
    <scope>TISSUE SPECIFICITY</scope>
</reference>
<reference key="2">
    <citation type="journal article" date="2006" name="Nature">
        <title>Analysis of the DNA sequence and duplication history of human chromosome 15.</title>
        <authorList>
            <person name="Zody M.C."/>
            <person name="Garber M."/>
            <person name="Sharpe T."/>
            <person name="Young S.K."/>
            <person name="Rowen L."/>
            <person name="O'Neill K."/>
            <person name="Whittaker C.A."/>
            <person name="Kamal M."/>
            <person name="Chang J.L."/>
            <person name="Cuomo C.A."/>
            <person name="Dewar K."/>
            <person name="FitzGerald M.G."/>
            <person name="Kodira C.D."/>
            <person name="Madan A."/>
            <person name="Qin S."/>
            <person name="Yang X."/>
            <person name="Abbasi N."/>
            <person name="Abouelleil A."/>
            <person name="Arachchi H.M."/>
            <person name="Baradarani L."/>
            <person name="Birditt B."/>
            <person name="Bloom S."/>
            <person name="Bloom T."/>
            <person name="Borowsky M.L."/>
            <person name="Burke J."/>
            <person name="Butler J."/>
            <person name="Cook A."/>
            <person name="DeArellano K."/>
            <person name="DeCaprio D."/>
            <person name="Dorris L. III"/>
            <person name="Dors M."/>
            <person name="Eichler E.E."/>
            <person name="Engels R."/>
            <person name="Fahey J."/>
            <person name="Fleetwood P."/>
            <person name="Friedman C."/>
            <person name="Gearin G."/>
            <person name="Hall J.L."/>
            <person name="Hensley G."/>
            <person name="Johnson E."/>
            <person name="Jones C."/>
            <person name="Kamat A."/>
            <person name="Kaur A."/>
            <person name="Locke D.P."/>
            <person name="Madan A."/>
            <person name="Munson G."/>
            <person name="Jaffe D.B."/>
            <person name="Lui A."/>
            <person name="Macdonald P."/>
            <person name="Mauceli E."/>
            <person name="Naylor J.W."/>
            <person name="Nesbitt R."/>
            <person name="Nicol R."/>
            <person name="O'Leary S.B."/>
            <person name="Ratcliffe A."/>
            <person name="Rounsley S."/>
            <person name="She X."/>
            <person name="Sneddon K.M.B."/>
            <person name="Stewart S."/>
            <person name="Sougnez C."/>
            <person name="Stone S.M."/>
            <person name="Topham K."/>
            <person name="Vincent D."/>
            <person name="Wang S."/>
            <person name="Zimmer A.R."/>
            <person name="Birren B.W."/>
            <person name="Hood L."/>
            <person name="Lander E.S."/>
            <person name="Nusbaum C."/>
        </authorList>
    </citation>
    <scope>NUCLEOTIDE SEQUENCE [LARGE SCALE GENOMIC DNA]</scope>
</reference>
<reference key="3">
    <citation type="journal article" date="2004" name="Genome Res.">
        <title>A genomic analysis of rat proteases and protease inhibitors.</title>
        <authorList>
            <person name="Puente X.S."/>
            <person name="Lopez-Otin C."/>
        </authorList>
    </citation>
    <scope>IDENTIFICATION</scope>
</reference>
<reference key="4">
    <citation type="journal article" date="2010" name="Cell Cycle">
        <title>A screen for deubiquitinating enzymes involved in the G(2)/M checkpoint identifies USP50 as a regulator of HSP90-dependent Wee1 stability.</title>
        <authorList>
            <person name="Aressy B."/>
            <person name="Jullien D."/>
            <person name="Cazales M."/>
            <person name="Marcellin M."/>
            <person name="Bugler B."/>
            <person name="Burlet-Schiltz O."/>
            <person name="Ducommun B."/>
        </authorList>
    </citation>
    <scope>FUNCTION</scope>
    <scope>SUBCELLULAR LOCATION</scope>
</reference>
<reference key="5">
    <citation type="journal article" date="2017" name="FEBS Lett.">
        <title>The deubiquitinating enzyme, ubiquitin-specific peptidase 50, regulates inflammasome activation by targeting the ASC adaptor protein.</title>
        <authorList>
            <person name="Lee J.Y."/>
            <person name="Seo D."/>
            <person name="You J."/>
            <person name="Chung S."/>
            <person name="Park J.S."/>
            <person name="Lee J.H."/>
            <person name="Jung S.M."/>
            <person name="Lee Y.S."/>
            <person name="Park S.H."/>
        </authorList>
    </citation>
    <scope>FUNCTION</scope>
    <scope>CATALYTIC ACTIVITY</scope>
    <scope>MUTAGENESIS OF CYS-53 AND HIS-327</scope>
    <scope>ACTIVE SITE</scope>
</reference>
<reference key="6">
    <citation type="journal article" date="2023" name="EMBO Rep.">
        <title>Vitamin C promotes ACE2 degradation and protects against SARS-CoV-2 infection.</title>
        <authorList>
            <person name="Zuo Y."/>
            <person name="Zheng Z."/>
            <person name="Huang Y."/>
            <person name="He J."/>
            <person name="Zang L."/>
            <person name="Ren T."/>
            <person name="Cao X."/>
            <person name="Miao Y."/>
            <person name="Yuan Y."/>
            <person name="Liu Y."/>
            <person name="Ma F."/>
            <person name="Dai J."/>
            <person name="Tian S."/>
            <person name="Ding Q."/>
            <person name="Zheng H."/>
        </authorList>
    </citation>
    <scope>FUNCTION</scope>
    <scope>CATALYTIC ACTIVITY</scope>
    <scope>MUTAGENESIS OF CYS-53</scope>
    <scope>ACTIVE SITE</scope>
</reference>
<protein>
    <recommendedName>
        <fullName>Ubiquitin carboxyl-terminal hydrolase 50</fullName>
        <ecNumber evidence="5 6">3.4.19.12</ecNumber>
    </recommendedName>
    <alternativeName>
        <fullName evidence="8">Ubiquitin-specific peptidase 50</fullName>
    </alternativeName>
</protein>
<comment type="function">
    <text evidence="4 5 6">Deubiquitinating enzyme that removes conjugated ubiquitin from specific proteins to regulate different cellular processes. Regulates the inflammasome signaling pathway by deubiquitinating 'Lys-63'-linked polyubiquitination of the PYCARD/ASC adapter protein (PubMed:28094437). Regulates the ubiquitination and stability of the ACE2 protein (PubMed:36876523). Acts as a negative regulator of the G2/M checkpoint pathway, by preventing serine/threonine kinase WEE1 degradation, thereby repressing entry into mitosis following activation of the G2/M DNA damage checkpoint (PubMed:20930503).</text>
</comment>
<comment type="catalytic activity">
    <reaction evidence="5 6">
        <text>Thiol-dependent hydrolysis of ester, thioester, amide, peptide and isopeptide bonds formed by the C-terminal Gly of ubiquitin (a 76-residue protein attached to proteins as an intracellular targeting signal).</text>
        <dbReference type="EC" id="3.4.19.12"/>
    </reaction>
</comment>
<comment type="subcellular location">
    <subcellularLocation>
        <location evidence="4">Cytoplasm</location>
    </subcellularLocation>
    <subcellularLocation>
        <location evidence="4">Cytoplasm</location>
        <location evidence="4">Cytoskeleton</location>
        <location evidence="4">Microtubule organizing center</location>
        <location evidence="4">Centrosome</location>
    </subcellularLocation>
    <subcellularLocation>
        <location evidence="4">Nucleus</location>
    </subcellularLocation>
    <text evidence="4">Accumulates in the nucleus following DNA injury.</text>
</comment>
<comment type="alternative products">
    <event type="alternative splicing"/>
    <isoform>
        <id>Q70EL3-1</id>
        <name>1</name>
        <sequence type="displayed"/>
    </isoform>
    <isoform>
        <id>Q70EL3-2</id>
        <name>2</name>
        <sequence type="described" ref="VSP_054248"/>
    </isoform>
</comment>
<comment type="tissue specificity">
    <text evidence="3">Weakly expressed in a few tissues.</text>
</comment>
<comment type="miscellaneous">
    <text evidence="6">Vitamin C blocks the USP50-ACE2 interaction and thereby promotes ACE2 degradation and restricts SARS-CoV-2 entry.</text>
</comment>
<comment type="miscellaneous">
    <molecule>Isoform 1</molecule>
    <text evidence="7">Splicing events through non-canonical splice sites.</text>
</comment>
<comment type="similarity">
    <text evidence="7">Belongs to the peptidase C19 family.</text>
</comment>